<proteinExistence type="evidence at protein level"/>
<sequence length="414" mass="45834">MFRMLAKASVTLGSRAASWVRNMGSHQLLVPPPEALSKPLSIPKRLLLGPGPSNLAPRVLAAGSLRMIGHMQKEMFQIMDEIKQGIQYVFQTRNPLTLVVSGSGHCAMETALFNLLEPGDSFLVGTNGIWGIRAAEIAERIGARVHQMIKKPGEHYTLQEVEEGLAQHKPVLLFLTHGESSTGVLQPLDGFGELCHRYQCLLLVDSVASLGGVPIYMDQQGIDILYSGSQKVLNAPPGISLISFNDKAKSKVYSRKTKPVSFYTDITYLSKLWGCEGKTRVIHHTLPVISLYCLRESLALISEQGLENSWRRHREATAHLHKCLRELGLKFFVKDPEIRLPTITTVTVPAGYNWRDIVSYVLDHFNIEISGGLGPSEDKVLRIGLLGYNATTENADRVAEALREALQHCPKNKL</sequence>
<evidence type="ECO:0000250" key="1"/>
<evidence type="ECO:0000250" key="2">
    <source>
        <dbReference type="UniProtKB" id="O35423"/>
    </source>
</evidence>
<evidence type="ECO:0000250" key="3">
    <source>
        <dbReference type="UniProtKB" id="P21549"/>
    </source>
</evidence>
<evidence type="ECO:0000269" key="4">
    <source>
    </source>
</evidence>
<evidence type="ECO:0000269" key="5">
    <source>
    </source>
</evidence>
<evidence type="ECO:0000269" key="6">
    <source>
    </source>
</evidence>
<evidence type="ECO:0000303" key="7">
    <source>
    </source>
</evidence>
<evidence type="ECO:0000303" key="8">
    <source>
    </source>
</evidence>
<evidence type="ECO:0000305" key="9"/>
<evidence type="ECO:0000305" key="10">
    <source>
    </source>
</evidence>
<evidence type="ECO:0000312" key="11">
    <source>
        <dbReference type="RGD" id="2073"/>
    </source>
</evidence>
<comment type="function">
    <molecule>Isoform Peroxisomal</molecule>
    <text evidence="3">Catalyzes the transamination of glyoxylate to glycine and contributes to the glyoxylate detoxification.</text>
</comment>
<comment type="function">
    <molecule>Isoform Mitochondrial</molecule>
    <text evidence="4">Catalyzes the transamination between L-serine and pyruvate and weakly contributes to gluconeogenesis from the L-serine metabolism.</text>
</comment>
<comment type="catalytic activity">
    <molecule>Isoform Mitochondrial</molecule>
    <reaction evidence="4">
        <text>L-serine + pyruvate = 3-hydroxypyruvate + L-alanine</text>
        <dbReference type="Rhea" id="RHEA:22852"/>
        <dbReference type="ChEBI" id="CHEBI:15361"/>
        <dbReference type="ChEBI" id="CHEBI:17180"/>
        <dbReference type="ChEBI" id="CHEBI:33384"/>
        <dbReference type="ChEBI" id="CHEBI:57972"/>
        <dbReference type="EC" id="2.6.1.51"/>
    </reaction>
    <physiologicalReaction direction="left-to-right" evidence="10">
        <dbReference type="Rhea" id="RHEA:22853"/>
    </physiologicalReaction>
</comment>
<comment type="catalytic activity">
    <molecule>Isoform Peroxisomal</molecule>
    <reaction evidence="3">
        <text>glyoxylate + L-alanine = glycine + pyruvate</text>
        <dbReference type="Rhea" id="RHEA:24248"/>
        <dbReference type="ChEBI" id="CHEBI:15361"/>
        <dbReference type="ChEBI" id="CHEBI:36655"/>
        <dbReference type="ChEBI" id="CHEBI:57305"/>
        <dbReference type="ChEBI" id="CHEBI:57972"/>
        <dbReference type="EC" id="2.6.1.44"/>
    </reaction>
    <physiologicalReaction direction="left-to-right" evidence="3">
        <dbReference type="Rhea" id="RHEA:24249"/>
    </physiologicalReaction>
</comment>
<comment type="cofactor">
    <cofactor evidence="3">
        <name>pyridoxal 5'-phosphate</name>
        <dbReference type="ChEBI" id="CHEBI:597326"/>
    </cofactor>
</comment>
<comment type="subunit">
    <text evidence="3">Homodimer.</text>
</comment>
<comment type="subcellular location">
    <molecule>Isoform Peroxisomal</molecule>
    <subcellularLocation>
        <location evidence="3">Peroxisome</location>
    </subcellularLocation>
</comment>
<comment type="subcellular location">
    <molecule>Isoform Mitochondrial</molecule>
    <subcellularLocation>
        <location evidence="6">Mitochondrion matrix</location>
    </subcellularLocation>
</comment>
<comment type="alternative products">
    <event type="alternative initiation"/>
    <isoform>
        <id>P09139-1</id>
        <name evidence="8">Mitochondrial</name>
        <sequence type="displayed"/>
    </isoform>
    <isoform>
        <id>P09139-2</id>
        <name evidence="7">Peroxisomal</name>
        <sequence type="described" ref="VSP_018645"/>
    </isoform>
</comment>
<comment type="induction">
    <molecule>Isoform Mitochondrial</molecule>
    <text evidence="5">Induced by glucagon and insulin.</text>
</comment>
<comment type="similarity">
    <text evidence="9">Belongs to the class-V pyridoxal-phosphate-dependent aminotransferase family.</text>
</comment>
<comment type="caution">
    <text evidence="9">The intracellular compartmentalization of AGTX in mammalian hepatocytes is species dependent. In human and rabbit, AGTX is peroxisomal. In new world monkeys (marmoset) and rodents (rat and mouse), it is distributed approximately evenly between peroxisomes and mitochondria. In carnivores, like cat, the great majority of the enzyme is mitochondrial with only a small proportion being peroxisomal.</text>
</comment>
<reference key="1">
    <citation type="journal article" date="1987" name="Eur. J. Biochem.">
        <title>Nucleotide sequence of the cDNA encoding the precursor for mitochondrial serine:pyruvate aminotransferase of rat liver.</title>
        <authorList>
            <person name="Oda T."/>
            <person name="Miyajima H."/>
            <person name="Suzuki Y."/>
            <person name="Ichiyama A."/>
        </authorList>
    </citation>
    <scope>NUCLEOTIDE SEQUENCE [MRNA] (ISOFORM MITOCHONDRIAL)</scope>
    <scope>PARTIAL PROTEIN SEQUENCE</scope>
    <source>
        <tissue>Liver</tissue>
    </source>
</reference>
<reference key="2">
    <citation type="journal article" date="1990" name="J. Biol. Chem.">
        <title>Generation from a single gene of two mRNAs that encode the mitochondrial and peroxisomal serine:pyruvate aminotransferase of rat liver.</title>
        <authorList>
            <person name="Oda T."/>
            <person name="Funai T."/>
            <person name="Ichiyama A."/>
        </authorList>
    </citation>
    <scope>NUCLEOTIDE SEQUENCE [MRNA] (ISOFORM PEROXISOMAL)</scope>
    <scope>ALTERNATIVE INITIATION</scope>
    <scope>INDUCTION</scope>
</reference>
<reference key="3">
    <citation type="journal article" date="1993" name="Genomics">
        <title>Characterization and sequence analysis of rat serine:pyruvate/alanine:glyoxylate aminotransferase gene.</title>
        <authorList>
            <person name="Oda T."/>
            <person name="Nishiyama K."/>
            <person name="Ichiyama A."/>
        </authorList>
    </citation>
    <scope>NUCLEOTIDE SEQUENCE [GENOMIC DNA] OF 1-141</scope>
    <source>
        <strain>Wistar</strain>
    </source>
</reference>
<reference key="4">
    <citation type="journal article" date="1984" name="J. Biochem.">
        <title>Uptake and processing of serine: pyruvate aminotransferase precursor by rat liver mitochondria in vitro and in vivo.</title>
        <authorList>
            <person name="Oda T."/>
            <person name="Ichiyama A."/>
            <person name="Miura S."/>
            <person name="Mori M."/>
        </authorList>
    </citation>
    <scope>SUBCELLULAR LOCATION</scope>
</reference>
<reference key="5">
    <citation type="journal article" date="1999" name="J. Biol. Chem.">
        <title>Flux of the L-serine metabolism in rat liver. The predominant contribution of serine dehydratase.</title>
        <authorList>
            <person name="Xue H.H."/>
            <person name="Fujie M."/>
            <person name="Sakaguchi T."/>
            <person name="Oda T."/>
            <person name="Ogawa H."/>
            <person name="Kneer N.M."/>
            <person name="Lardy H.A."/>
            <person name="Ichiyama A."/>
        </authorList>
    </citation>
    <scope>FUNCTION (ISOFORM MITOCHONDRIAL)</scope>
    <scope>CATALYTIC ACTIVITY(ISOFORM MITOCHONDRIAL)</scope>
</reference>
<gene>
    <name evidence="11" type="primary">Agxt</name>
    <name type="synonym">Agt1</name>
</gene>
<keyword id="KW-0007">Acetylation</keyword>
<keyword id="KW-0024">Alternative initiation</keyword>
<keyword id="KW-0032">Aminotransferase</keyword>
<keyword id="KW-0903">Direct protein sequencing</keyword>
<keyword id="KW-0496">Mitochondrion</keyword>
<keyword id="KW-0576">Peroxisome</keyword>
<keyword id="KW-0663">Pyridoxal phosphate</keyword>
<keyword id="KW-1185">Reference proteome</keyword>
<keyword id="KW-0808">Transferase</keyword>
<keyword id="KW-0809">Transit peptide</keyword>
<accession>P09139</accession>
<accession>Q9R2C7</accession>
<feature type="transit peptide" description="Mitochondrion">
    <location>
        <begin position="1"/>
        <end position="23"/>
    </location>
</feature>
<feature type="chain" id="PRO_0000001290" description="Alanine--glyoxylate aminotransferase">
    <location>
        <begin position="24"/>
        <end position="414"/>
    </location>
</feature>
<feature type="short sequence motif" description="Microbody targeting signal" evidence="1">
    <location>
        <begin position="412"/>
        <end position="414"/>
    </location>
</feature>
<feature type="binding site" evidence="1">
    <location>
        <position position="382"/>
    </location>
    <ligand>
        <name>substrate</name>
    </ligand>
</feature>
<feature type="modified residue" description="N6-(pyridoxal phosphate)lysine" evidence="1">
    <location>
        <position position="231"/>
    </location>
</feature>
<feature type="modified residue" description="N6-acetyllysine; alternate" evidence="2">
    <location>
        <position position="247"/>
    </location>
</feature>
<feature type="modified residue" description="N6-succinyllysine; alternate" evidence="2">
    <location>
        <position position="247"/>
    </location>
</feature>
<feature type="modified residue" description="N6-acetyllysine" evidence="2">
    <location>
        <position position="256"/>
    </location>
</feature>
<feature type="modified residue" description="N6-acetyllysine" evidence="2">
    <location>
        <position position="334"/>
    </location>
</feature>
<feature type="splice variant" id="VSP_018645" description="In isoform Peroxisomal." evidence="9">
    <location>
        <begin position="1"/>
        <end position="22"/>
    </location>
</feature>
<name>AGT1_RAT</name>
<dbReference type="EC" id="2.6.1.44" evidence="3"/>
<dbReference type="EC" id="2.6.1.51" evidence="4"/>
<dbReference type="EMBL" id="X06357">
    <property type="protein sequence ID" value="CAA29656.1"/>
    <property type="molecule type" value="mRNA"/>
</dbReference>
<dbReference type="EMBL" id="D13667">
    <property type="protein sequence ID" value="BAA02838.1"/>
    <property type="molecule type" value="Genomic_DNA"/>
</dbReference>
<dbReference type="EMBL" id="M35270">
    <property type="protein sequence ID" value="AAA42169.1"/>
    <property type="molecule type" value="mRNA"/>
</dbReference>
<dbReference type="PIR" id="S00164">
    <property type="entry name" value="XNRTSP"/>
</dbReference>
<dbReference type="RefSeq" id="NP_001263635.1">
    <molecule id="P09139-2"/>
    <property type="nucleotide sequence ID" value="NM_001276706.1"/>
</dbReference>
<dbReference type="RefSeq" id="NP_085914.2">
    <molecule id="P09139-1"/>
    <property type="nucleotide sequence ID" value="NM_030656.2"/>
</dbReference>
<dbReference type="SMR" id="P09139"/>
<dbReference type="FunCoup" id="P09139">
    <property type="interactions" value="389"/>
</dbReference>
<dbReference type="STRING" id="10116.ENSRNOP00000030340"/>
<dbReference type="iPTMnet" id="P09139"/>
<dbReference type="PhosphoSitePlus" id="P09139"/>
<dbReference type="PaxDb" id="10116-ENSRNOP00000030340"/>
<dbReference type="Ensembl" id="ENSRNOT00000029127.4">
    <molecule id="P09139-1"/>
    <property type="protein sequence ID" value="ENSRNOP00000030340.2"/>
    <property type="gene ID" value="ENSRNOG00000023856.4"/>
</dbReference>
<dbReference type="GeneID" id="24792"/>
<dbReference type="KEGG" id="rno:24792"/>
<dbReference type="UCSC" id="RGD:2073">
    <molecule id="P09139-1"/>
    <property type="organism name" value="rat"/>
</dbReference>
<dbReference type="AGR" id="RGD:2073"/>
<dbReference type="CTD" id="189"/>
<dbReference type="RGD" id="2073">
    <property type="gene designation" value="Agxt"/>
</dbReference>
<dbReference type="eggNOG" id="KOG2862">
    <property type="taxonomic scope" value="Eukaryota"/>
</dbReference>
<dbReference type="GeneTree" id="ENSGT00940000153241"/>
<dbReference type="HOGENOM" id="CLU_027686_0_0_1"/>
<dbReference type="InParanoid" id="P09139"/>
<dbReference type="OMA" id="YEWDTPA"/>
<dbReference type="OrthoDB" id="7403325at2759"/>
<dbReference type="PhylomeDB" id="P09139"/>
<dbReference type="TreeFam" id="TF313234"/>
<dbReference type="BioCyc" id="MetaCyc:MONOMER-13151"/>
<dbReference type="Reactome" id="R-RNO-389661">
    <property type="pathway name" value="Glyoxylate metabolism and glycine degradation"/>
</dbReference>
<dbReference type="Reactome" id="R-RNO-9033241">
    <property type="pathway name" value="Peroxisomal protein import"/>
</dbReference>
<dbReference type="SABIO-RK" id="P09139"/>
<dbReference type="PRO" id="PR:P09139"/>
<dbReference type="Proteomes" id="UP000002494">
    <property type="component" value="Chromosome 9"/>
</dbReference>
<dbReference type="Bgee" id="ENSRNOG00000023856">
    <property type="expression patterns" value="Expressed in liver and 1 other cell type or tissue"/>
</dbReference>
<dbReference type="ExpressionAtlas" id="P09139">
    <property type="expression patterns" value="baseline and differential"/>
</dbReference>
<dbReference type="GO" id="GO:0005759">
    <property type="term" value="C:mitochondrial matrix"/>
    <property type="evidence" value="ECO:0000314"/>
    <property type="project" value="HGNC-UCL"/>
</dbReference>
<dbReference type="GO" id="GO:0005739">
    <property type="term" value="C:mitochondrion"/>
    <property type="evidence" value="ECO:0000304"/>
    <property type="project" value="HGNC-UCL"/>
</dbReference>
<dbReference type="GO" id="GO:0005782">
    <property type="term" value="C:peroxisomal matrix"/>
    <property type="evidence" value="ECO:0000266"/>
    <property type="project" value="RGD"/>
</dbReference>
<dbReference type="GO" id="GO:0005777">
    <property type="term" value="C:peroxisome"/>
    <property type="evidence" value="ECO:0000314"/>
    <property type="project" value="HGNC-UCL"/>
</dbReference>
<dbReference type="GO" id="GO:0008453">
    <property type="term" value="F:alanine-glyoxylate transaminase activity"/>
    <property type="evidence" value="ECO:0000314"/>
    <property type="project" value="RGD"/>
</dbReference>
<dbReference type="GO" id="GO:0016597">
    <property type="term" value="F:amino acid binding"/>
    <property type="evidence" value="ECO:0000314"/>
    <property type="project" value="RGD"/>
</dbReference>
<dbReference type="GO" id="GO:0042802">
    <property type="term" value="F:identical protein binding"/>
    <property type="evidence" value="ECO:0000266"/>
    <property type="project" value="RGD"/>
</dbReference>
<dbReference type="GO" id="GO:0004760">
    <property type="term" value="F:L-serine-pyruvate transaminase activity"/>
    <property type="evidence" value="ECO:0000314"/>
    <property type="project" value="RGD"/>
</dbReference>
<dbReference type="GO" id="GO:0042803">
    <property type="term" value="F:protein homodimerization activity"/>
    <property type="evidence" value="ECO:0000250"/>
    <property type="project" value="UniProtKB"/>
</dbReference>
<dbReference type="GO" id="GO:0030170">
    <property type="term" value="F:pyridoxal phosphate binding"/>
    <property type="evidence" value="ECO:0000266"/>
    <property type="project" value="RGD"/>
</dbReference>
<dbReference type="GO" id="GO:0008483">
    <property type="term" value="F:transaminase activity"/>
    <property type="evidence" value="ECO:0000266"/>
    <property type="project" value="RGD"/>
</dbReference>
<dbReference type="GO" id="GO:0019265">
    <property type="term" value="P:glycine biosynthetic process, by transamination of glyoxylate"/>
    <property type="evidence" value="ECO:0000314"/>
    <property type="project" value="RGD"/>
</dbReference>
<dbReference type="GO" id="GO:0009436">
    <property type="term" value="P:glyoxylate catabolic process"/>
    <property type="evidence" value="ECO:0000266"/>
    <property type="project" value="RGD"/>
</dbReference>
<dbReference type="GO" id="GO:0046487">
    <property type="term" value="P:glyoxylate metabolic process"/>
    <property type="evidence" value="ECO:0000250"/>
    <property type="project" value="UniProtKB"/>
</dbReference>
<dbReference type="GO" id="GO:0042853">
    <property type="term" value="P:L-alanine catabolic process"/>
    <property type="evidence" value="ECO:0000266"/>
    <property type="project" value="RGD"/>
</dbReference>
<dbReference type="GO" id="GO:0019448">
    <property type="term" value="P:L-cysteine catabolic process"/>
    <property type="evidence" value="ECO:0000266"/>
    <property type="project" value="RGD"/>
</dbReference>
<dbReference type="GO" id="GO:0006563">
    <property type="term" value="P:L-serine metabolic process"/>
    <property type="evidence" value="ECO:0000266"/>
    <property type="project" value="RGD"/>
</dbReference>
<dbReference type="GO" id="GO:0007219">
    <property type="term" value="P:Notch signaling pathway"/>
    <property type="evidence" value="ECO:0000266"/>
    <property type="project" value="RGD"/>
</dbReference>
<dbReference type="GO" id="GO:0046724">
    <property type="term" value="P:oxalic acid secretion"/>
    <property type="evidence" value="ECO:0000266"/>
    <property type="project" value="RGD"/>
</dbReference>
<dbReference type="GO" id="GO:0042866">
    <property type="term" value="P:pyruvate biosynthetic process"/>
    <property type="evidence" value="ECO:0000314"/>
    <property type="project" value="RGD"/>
</dbReference>
<dbReference type="GO" id="GO:0051591">
    <property type="term" value="P:response to cAMP"/>
    <property type="evidence" value="ECO:0000314"/>
    <property type="project" value="RGD"/>
</dbReference>
<dbReference type="GO" id="GO:0051384">
    <property type="term" value="P:response to glucocorticoid"/>
    <property type="evidence" value="ECO:0000314"/>
    <property type="project" value="RGD"/>
</dbReference>
<dbReference type="CDD" id="cd06451">
    <property type="entry name" value="AGAT_like"/>
    <property type="match status" value="1"/>
</dbReference>
<dbReference type="FunFam" id="3.90.1150.10:FF:000039">
    <property type="entry name" value="Serine--pyruvate aminotransferase"/>
    <property type="match status" value="1"/>
</dbReference>
<dbReference type="FunFam" id="3.40.640.10:FF:000027">
    <property type="entry name" value="Serine--pyruvate aminotransferase, mitochondrial"/>
    <property type="match status" value="1"/>
</dbReference>
<dbReference type="Gene3D" id="3.90.1150.10">
    <property type="entry name" value="Aspartate Aminotransferase, domain 1"/>
    <property type="match status" value="1"/>
</dbReference>
<dbReference type="Gene3D" id="3.40.640.10">
    <property type="entry name" value="Type I PLP-dependent aspartate aminotransferase-like (Major domain)"/>
    <property type="match status" value="1"/>
</dbReference>
<dbReference type="InterPro" id="IPR000192">
    <property type="entry name" value="Aminotrans_V_dom"/>
</dbReference>
<dbReference type="InterPro" id="IPR020578">
    <property type="entry name" value="Aminotrans_V_PyrdxlP_BS"/>
</dbReference>
<dbReference type="InterPro" id="IPR015424">
    <property type="entry name" value="PyrdxlP-dep_Trfase"/>
</dbReference>
<dbReference type="InterPro" id="IPR015421">
    <property type="entry name" value="PyrdxlP-dep_Trfase_major"/>
</dbReference>
<dbReference type="InterPro" id="IPR015422">
    <property type="entry name" value="PyrdxlP-dep_Trfase_small"/>
</dbReference>
<dbReference type="InterPro" id="IPR024169">
    <property type="entry name" value="SP_NH2Trfase/AEP_transaminase"/>
</dbReference>
<dbReference type="PANTHER" id="PTHR21152:SF40">
    <property type="entry name" value="ALANINE--GLYOXYLATE AMINOTRANSFERASE"/>
    <property type="match status" value="1"/>
</dbReference>
<dbReference type="PANTHER" id="PTHR21152">
    <property type="entry name" value="AMINOTRANSFERASE CLASS V"/>
    <property type="match status" value="1"/>
</dbReference>
<dbReference type="Pfam" id="PF00266">
    <property type="entry name" value="Aminotran_5"/>
    <property type="match status" value="1"/>
</dbReference>
<dbReference type="PIRSF" id="PIRSF000524">
    <property type="entry name" value="SPT"/>
    <property type="match status" value="1"/>
</dbReference>
<dbReference type="SUPFAM" id="SSF53383">
    <property type="entry name" value="PLP-dependent transferases"/>
    <property type="match status" value="1"/>
</dbReference>
<dbReference type="PROSITE" id="PS00595">
    <property type="entry name" value="AA_TRANSFER_CLASS_5"/>
    <property type="match status" value="1"/>
</dbReference>
<organism>
    <name type="scientific">Rattus norvegicus</name>
    <name type="common">Rat</name>
    <dbReference type="NCBI Taxonomy" id="10116"/>
    <lineage>
        <taxon>Eukaryota</taxon>
        <taxon>Metazoa</taxon>
        <taxon>Chordata</taxon>
        <taxon>Craniata</taxon>
        <taxon>Vertebrata</taxon>
        <taxon>Euteleostomi</taxon>
        <taxon>Mammalia</taxon>
        <taxon>Eutheria</taxon>
        <taxon>Euarchontoglires</taxon>
        <taxon>Glires</taxon>
        <taxon>Rodentia</taxon>
        <taxon>Myomorpha</taxon>
        <taxon>Muroidea</taxon>
        <taxon>Muridae</taxon>
        <taxon>Murinae</taxon>
        <taxon>Rattus</taxon>
    </lineage>
</organism>
<protein>
    <recommendedName>
        <fullName evidence="9">Alanine--glyoxylate aminotransferase</fullName>
        <shortName>AGT</shortName>
        <ecNumber evidence="3">2.6.1.44</ecNumber>
    </recommendedName>
    <alternativeName>
        <fullName evidence="9">Serine--pyruvate aminotransferase, mitochondrial</fullName>
        <shortName>SPT</shortName>
        <ecNumber evidence="4">2.6.1.51</ecNumber>
    </alternativeName>
</protein>